<sequence>MLGASSSEEEDDDFQEDHDSLPIAQVKKRSLLSGAMTPRSSSPAPSDSVSQTNSLKRNNSSSQGRRKDSVQSQTPARSARIMSNVSKPIMQNSQEFDGDEEEGEEGSTTVVGSGDECGGPALSKEEQERMKAEREEEDHKKNLQMYMFLARCIAYPFNGQQTGDMARRQMKVNKQELARIRERFTLFLKGETNIAADEAFTKAIQSYFEVFLKSERVQKVVHAGGFSQHDFREVFRLNIEKRVRSLPDIEGLSKDTVLNSWLAKFDAIIKGDETDQNRNARGRSRNPQNAMSADAVLGKEQLYDVFQQILGVKKFEHQIIFNALQLDNPDEQAAAIRREFATREEALKDPIKMKRLTPKFVVKDMETLYMDEVRMSINTLIGNLETVPVTTRGATVGKRKDKSRSRSIEDLSLFNSLKRRTSSGSLNKGDSEDGDVTLTKSDVSLALSMEVVVMEVQGLKSVQPSKIVYCTMEVDGHKLQTDHAEASKPKWDTQGDFSTKNPLPVVKVKLYTEVKSMIAFEDKELGKVIIQPTPNCARSPEWYTMTLPKSSQDQNLKIRIAIRVEKPPNLKYCGYCYCIGRNAWKKWKKRFFCLVQVSQYAFAVCSFRQKKADPTEFIQLDGFTIDYMPESDPELSAQGGKHFFTAIKEGDELKFATDDENERHLWVQALYRATGQAYKPVPPKQSTIAPKAQGFQDKASKHGMDAMIQADSINFDHDHFYSDVQRLTLDFRINEPICSLGWFSPGQAFVLEEYSARYMVRGCFRHVTLLSNLLDKADDGLLIDPALIHYSFAFCASHVHGNRCMPDRQGPEGVGTVTLEEKEKFQEIKERLRVLLEKQITNFRYCFPFGRPEGALKGTLGLLERVLMKDVVSPVPPEEVRAVIRKCLEDAALVNYTRICNEAKIEQRMGIDVSPAQRIEDMIRVTEFCIDLLKENEEHHGEAFAWFSDLLSDHSEIFWSLYSVDLDSALEVQPHDSWDSFPLFQMLNDFLLSESSLKGGIFHNKIVQQFQPLVVRYIDLMEHSIAQAIDKGFSKEKWESRKEGCATSEDIYWKLDALHTFVIDLNWPEEDFRKYLQTKMKSLTSDMISKVSDCTFTAFDSWMQRAKKSTDYMLPSEVCVQINVMFSSKSRAVRVTVDSGEYKYQSKLDETLETMLKTMESCIQEKLHGVLESVLSRLARYDEGNPIGAILNIAPKPASIFNKLKTMAGDTSAQATTTARQPLTAQQSSGQIGNSYVTFFHGCTELLRQVIIDEIWVNGLFEHWYDNQMKSINEWLTERLQQSLSATQYISLSTIVKKVYQDFSLQGIDEERLNSKTYQSISRRLQLEESNSHIQEAAINGSAQGSVFPTSLGNATAAVSNMSSMVEGAGAKMFSLFK</sequence>
<dbReference type="EMBL" id="Z69665">
    <property type="protein sequence ID" value="CAA93520.6"/>
    <property type="molecule type" value="Genomic_DNA"/>
</dbReference>
<dbReference type="EMBL" id="Z69665">
    <property type="protein sequence ID" value="CAX65097.2"/>
    <property type="molecule type" value="Genomic_DNA"/>
</dbReference>
<dbReference type="EMBL" id="Z69665">
    <property type="protein sequence ID" value="CBK19526.1"/>
    <property type="molecule type" value="Genomic_DNA"/>
</dbReference>
<dbReference type="EMBL" id="Z69665">
    <property type="protein sequence ID" value="CBK19527.1"/>
    <property type="molecule type" value="Genomic_DNA"/>
</dbReference>
<dbReference type="EMBL" id="Z69665">
    <property type="protein sequence ID" value="CBK19528.1"/>
    <property type="molecule type" value="Genomic_DNA"/>
</dbReference>
<dbReference type="EMBL" id="Z69665">
    <property type="protein sequence ID" value="CBK19529.1"/>
    <property type="molecule type" value="Genomic_DNA"/>
</dbReference>
<dbReference type="PIR" id="H88869">
    <property type="entry name" value="H88869"/>
</dbReference>
<dbReference type="PIR" id="T28087">
    <property type="entry name" value="T28087"/>
</dbReference>
<dbReference type="RefSeq" id="NP_001255664.1">
    <molecule id="Q23658-3"/>
    <property type="nucleotide sequence ID" value="NM_001268735.4"/>
</dbReference>
<dbReference type="RefSeq" id="NP_001255666.1">
    <molecule id="Q23658-1"/>
    <property type="nucleotide sequence ID" value="NM_001268737.4"/>
</dbReference>
<dbReference type="RefSeq" id="NP_001255667.1">
    <molecule id="Q23658-2"/>
    <property type="nucleotide sequence ID" value="NM_001268738.4"/>
</dbReference>
<dbReference type="RefSeq" id="NP_001255668.1">
    <molecule id="Q23658-5"/>
    <property type="nucleotide sequence ID" value="NM_001268739.3"/>
</dbReference>
<dbReference type="RefSeq" id="NP_001255669.1">
    <molecule id="Q23658-4"/>
    <property type="nucleotide sequence ID" value="NM_001268740.3"/>
</dbReference>
<dbReference type="RefSeq" id="NP_001255671.1">
    <molecule id="Q23658-6"/>
    <property type="nucleotide sequence ID" value="NM_001268742.1"/>
</dbReference>
<dbReference type="SMR" id="Q23658"/>
<dbReference type="BioGRID" id="43325">
    <property type="interactions" value="1"/>
</dbReference>
<dbReference type="FunCoup" id="Q23658">
    <property type="interactions" value="895"/>
</dbReference>
<dbReference type="STRING" id="6239.ZK897.1j.1"/>
<dbReference type="TCDB" id="1.F.1.1.3">
    <property type="family name" value="the synaptosomal vesicle fusion pore (svf-pore) family"/>
</dbReference>
<dbReference type="PaxDb" id="6239-ZK897.1i"/>
<dbReference type="PeptideAtlas" id="Q23658"/>
<dbReference type="EnsemblMetazoa" id="ZK897.1a.1">
    <molecule id="Q23658-1"/>
    <property type="protein sequence ID" value="ZK897.1a.1"/>
    <property type="gene ID" value="WBGene00006767"/>
</dbReference>
<dbReference type="EnsemblMetazoa" id="ZK897.1b.1">
    <molecule id="Q23658-2"/>
    <property type="protein sequence ID" value="ZK897.1b.1"/>
    <property type="gene ID" value="WBGene00006767"/>
</dbReference>
<dbReference type="EnsemblMetazoa" id="ZK897.1c.1">
    <molecule id="Q23658-3"/>
    <property type="protein sequence ID" value="ZK897.1c.1"/>
    <property type="gene ID" value="WBGene00006767"/>
</dbReference>
<dbReference type="EnsemblMetazoa" id="ZK897.1d.1">
    <molecule id="Q23658-4"/>
    <property type="protein sequence ID" value="ZK897.1d.1"/>
    <property type="gene ID" value="WBGene00006767"/>
</dbReference>
<dbReference type="EnsemblMetazoa" id="ZK897.1e.1">
    <molecule id="Q23658-5"/>
    <property type="protein sequence ID" value="ZK897.1e.1"/>
    <property type="gene ID" value="WBGene00006767"/>
</dbReference>
<dbReference type="EnsemblMetazoa" id="ZK897.1f.1">
    <molecule id="Q23658-6"/>
    <property type="protein sequence ID" value="ZK897.1f.1"/>
    <property type="gene ID" value="WBGene00006767"/>
</dbReference>
<dbReference type="GeneID" id="178233"/>
<dbReference type="KEGG" id="cel:CELE_ZK897.1"/>
<dbReference type="UCSC" id="ZK897.1">
    <molecule id="Q23658-3"/>
    <property type="organism name" value="c. elegans"/>
</dbReference>
<dbReference type="AGR" id="WB:WBGene00006767"/>
<dbReference type="CTD" id="178233"/>
<dbReference type="WormBase" id="ZK897.1a">
    <molecule id="Q23658-1"/>
    <property type="protein sequence ID" value="CE44675"/>
    <property type="gene ID" value="WBGene00006767"/>
    <property type="gene designation" value="unc-31"/>
</dbReference>
<dbReference type="WormBase" id="ZK897.1b">
    <molecule id="Q23658-2"/>
    <property type="protein sequence ID" value="CE44637"/>
    <property type="gene ID" value="WBGene00006767"/>
    <property type="gene designation" value="unc-31"/>
</dbReference>
<dbReference type="WormBase" id="ZK897.1c">
    <molecule id="Q23658-3"/>
    <property type="protein sequence ID" value="CE44563"/>
    <property type="gene ID" value="WBGene00006767"/>
    <property type="gene designation" value="unc-31"/>
</dbReference>
<dbReference type="WormBase" id="ZK897.1d">
    <molecule id="Q23658-4"/>
    <property type="protein sequence ID" value="CE44694"/>
    <property type="gene ID" value="WBGene00006767"/>
    <property type="gene designation" value="unc-31"/>
</dbReference>
<dbReference type="WormBase" id="ZK897.1e">
    <molecule id="Q23658-5"/>
    <property type="protein sequence ID" value="CE44651"/>
    <property type="gene ID" value="WBGene00006767"/>
    <property type="gene designation" value="unc-31"/>
</dbReference>
<dbReference type="WormBase" id="ZK897.1f">
    <molecule id="Q23658-6"/>
    <property type="protein sequence ID" value="CE44601"/>
    <property type="gene ID" value="WBGene00006767"/>
    <property type="gene designation" value="unc-31"/>
</dbReference>
<dbReference type="eggNOG" id="KOG3543">
    <property type="taxonomic scope" value="Eukaryota"/>
</dbReference>
<dbReference type="GeneTree" id="ENSGT00590000083094"/>
<dbReference type="InParanoid" id="Q23658"/>
<dbReference type="PhylomeDB" id="Q23658"/>
<dbReference type="PRO" id="PR:Q23658"/>
<dbReference type="Proteomes" id="UP000001940">
    <property type="component" value="Chromosome IV"/>
</dbReference>
<dbReference type="Bgee" id="WBGene00006767">
    <property type="expression patterns" value="Expressed in larva and 3 other cell types or tissues"/>
</dbReference>
<dbReference type="ExpressionAtlas" id="Q23658">
    <property type="expression patterns" value="baseline"/>
</dbReference>
<dbReference type="GO" id="GO:0030424">
    <property type="term" value="C:axon"/>
    <property type="evidence" value="ECO:0000314"/>
    <property type="project" value="WormBase"/>
</dbReference>
<dbReference type="GO" id="GO:0030659">
    <property type="term" value="C:cytoplasmic vesicle membrane"/>
    <property type="evidence" value="ECO:0007669"/>
    <property type="project" value="UniProtKB-SubCell"/>
</dbReference>
<dbReference type="GO" id="GO:0031045">
    <property type="term" value="C:dense core granule"/>
    <property type="evidence" value="ECO:0000314"/>
    <property type="project" value="WormBase"/>
</dbReference>
<dbReference type="GO" id="GO:0043025">
    <property type="term" value="C:neuronal cell body"/>
    <property type="evidence" value="ECO:0000314"/>
    <property type="project" value="WormBase"/>
</dbReference>
<dbReference type="GO" id="GO:0098793">
    <property type="term" value="C:presynapse"/>
    <property type="evidence" value="ECO:0007669"/>
    <property type="project" value="GOC"/>
</dbReference>
<dbReference type="GO" id="GO:0045202">
    <property type="term" value="C:synapse"/>
    <property type="evidence" value="ECO:0000314"/>
    <property type="project" value="WormBase"/>
</dbReference>
<dbReference type="GO" id="GO:0005509">
    <property type="term" value="F:calcium ion binding"/>
    <property type="evidence" value="ECO:0000250"/>
    <property type="project" value="WormBase"/>
</dbReference>
<dbReference type="GO" id="GO:0005546">
    <property type="term" value="F:phosphatidylinositol-4,5-bisphosphate binding"/>
    <property type="evidence" value="ECO:0000250"/>
    <property type="project" value="WormBase"/>
</dbReference>
<dbReference type="GO" id="GO:0071244">
    <property type="term" value="P:cellular response to carbon dioxide"/>
    <property type="evidence" value="ECO:0000315"/>
    <property type="project" value="UniProtKB"/>
</dbReference>
<dbReference type="GO" id="GO:1902075">
    <property type="term" value="P:cellular response to salt"/>
    <property type="evidence" value="ECO:0000315"/>
    <property type="project" value="UniProtKB"/>
</dbReference>
<dbReference type="GO" id="GO:0007635">
    <property type="term" value="P:chemosensory behavior"/>
    <property type="evidence" value="ECO:0000315"/>
    <property type="project" value="UniProtKB"/>
</dbReference>
<dbReference type="GO" id="GO:1990504">
    <property type="term" value="P:dense core granule exocytosis"/>
    <property type="evidence" value="ECO:0000315"/>
    <property type="project" value="WormBase"/>
</dbReference>
<dbReference type="GO" id="GO:0018991">
    <property type="term" value="P:egg-laying behavior"/>
    <property type="evidence" value="ECO:0000315"/>
    <property type="project" value="WormBase"/>
</dbReference>
<dbReference type="GO" id="GO:0006887">
    <property type="term" value="P:exocytosis"/>
    <property type="evidence" value="ECO:0000318"/>
    <property type="project" value="GO_Central"/>
</dbReference>
<dbReference type="GO" id="GO:0030536">
    <property type="term" value="P:larval feeding behavior"/>
    <property type="evidence" value="ECO:0000315"/>
    <property type="project" value="UniProtKB"/>
</dbReference>
<dbReference type="GO" id="GO:0007626">
    <property type="term" value="P:locomotory behavior"/>
    <property type="evidence" value="ECO:0000315"/>
    <property type="project" value="WormBase"/>
</dbReference>
<dbReference type="GO" id="GO:1903745">
    <property type="term" value="P:negative regulation of nematode pharyngeal pumping"/>
    <property type="evidence" value="ECO:0000315"/>
    <property type="project" value="UniProtKB"/>
</dbReference>
<dbReference type="GO" id="GO:1905488">
    <property type="term" value="P:positive regulation of anterior/posterior axon guidance"/>
    <property type="evidence" value="ECO:0000316"/>
    <property type="project" value="UniProtKB"/>
</dbReference>
<dbReference type="GO" id="GO:0099525">
    <property type="term" value="P:presynaptic dense core vesicle exocytosis"/>
    <property type="evidence" value="ECO:0000314"/>
    <property type="project" value="SynGO"/>
</dbReference>
<dbReference type="GO" id="GO:0015031">
    <property type="term" value="P:protein transport"/>
    <property type="evidence" value="ECO:0007669"/>
    <property type="project" value="UniProtKB-KW"/>
</dbReference>
<dbReference type="GO" id="GO:1903998">
    <property type="term" value="P:regulation of eating behavior"/>
    <property type="evidence" value="ECO:0000315"/>
    <property type="project" value="UniProtKB"/>
</dbReference>
<dbReference type="GO" id="GO:0090325">
    <property type="term" value="P:regulation of locomotion involved in locomotory behavior"/>
    <property type="evidence" value="ECO:0000316"/>
    <property type="project" value="WormBase"/>
</dbReference>
<dbReference type="GO" id="GO:0006937">
    <property type="term" value="P:regulation of muscle contraction"/>
    <property type="evidence" value="ECO:0000316"/>
    <property type="project" value="UniProtKB"/>
</dbReference>
<dbReference type="GO" id="GO:0001820">
    <property type="term" value="P:serotonin secretion"/>
    <property type="evidence" value="ECO:0000315"/>
    <property type="project" value="WormBase"/>
</dbReference>
<dbReference type="GO" id="GO:0007419">
    <property type="term" value="P:ventral cord development"/>
    <property type="evidence" value="ECO:0000316"/>
    <property type="project" value="UniProtKB"/>
</dbReference>
<dbReference type="CDD" id="cd01234">
    <property type="entry name" value="PH_CADPS"/>
    <property type="match status" value="1"/>
</dbReference>
<dbReference type="FunFam" id="2.30.29.30:FF:000343">
    <property type="entry name" value="Calcium-dependent secretion activator"/>
    <property type="match status" value="1"/>
</dbReference>
<dbReference type="FunFam" id="2.60.40.150:FF:000239">
    <property type="entry name" value="Calcium-dependent secretion activator"/>
    <property type="match status" value="1"/>
</dbReference>
<dbReference type="Gene3D" id="2.60.40.150">
    <property type="entry name" value="C2 domain"/>
    <property type="match status" value="1"/>
</dbReference>
<dbReference type="Gene3D" id="2.30.29.30">
    <property type="entry name" value="Pleckstrin-homology domain (PH domain)/Phosphotyrosine-binding domain (PTB)"/>
    <property type="match status" value="1"/>
</dbReference>
<dbReference type="InterPro" id="IPR000008">
    <property type="entry name" value="C2_dom"/>
</dbReference>
<dbReference type="InterPro" id="IPR035892">
    <property type="entry name" value="C2_domain_sf"/>
</dbReference>
<dbReference type="InterPro" id="IPR033227">
    <property type="entry name" value="CAPS"/>
</dbReference>
<dbReference type="InterPro" id="IPR010439">
    <property type="entry name" value="MUN_dom"/>
</dbReference>
<dbReference type="InterPro" id="IPR014770">
    <property type="entry name" value="Munc13_1"/>
</dbReference>
<dbReference type="InterPro" id="IPR011993">
    <property type="entry name" value="PH-like_dom_sf"/>
</dbReference>
<dbReference type="InterPro" id="IPR001849">
    <property type="entry name" value="PH_domain"/>
</dbReference>
<dbReference type="PANTHER" id="PTHR12166">
    <property type="entry name" value="CALCIUM-DEPENDENT SECRETION ACTIVATOR"/>
    <property type="match status" value="1"/>
</dbReference>
<dbReference type="PANTHER" id="PTHR12166:SF8">
    <property type="entry name" value="CALCIUM-DEPENDENT SECRETION ACTIVATOR"/>
    <property type="match status" value="1"/>
</dbReference>
<dbReference type="Pfam" id="PF25341">
    <property type="entry name" value="C2_CAPS"/>
    <property type="match status" value="1"/>
</dbReference>
<dbReference type="Pfam" id="PF06292">
    <property type="entry name" value="MUN"/>
    <property type="match status" value="1"/>
</dbReference>
<dbReference type="Pfam" id="PF00169">
    <property type="entry name" value="PH"/>
    <property type="match status" value="1"/>
</dbReference>
<dbReference type="SMART" id="SM01145">
    <property type="entry name" value="DUF1041"/>
    <property type="match status" value="1"/>
</dbReference>
<dbReference type="SMART" id="SM00233">
    <property type="entry name" value="PH"/>
    <property type="match status" value="1"/>
</dbReference>
<dbReference type="SUPFAM" id="SSF49562">
    <property type="entry name" value="C2 domain (Calcium/lipid-binding domain, CaLB)"/>
    <property type="match status" value="1"/>
</dbReference>
<dbReference type="SUPFAM" id="SSF50729">
    <property type="entry name" value="PH domain-like"/>
    <property type="match status" value="1"/>
</dbReference>
<dbReference type="PROSITE" id="PS50004">
    <property type="entry name" value="C2"/>
    <property type="match status" value="1"/>
</dbReference>
<dbReference type="PROSITE" id="PS51258">
    <property type="entry name" value="MHD1"/>
    <property type="match status" value="1"/>
</dbReference>
<dbReference type="PROSITE" id="PS50003">
    <property type="entry name" value="PH_DOMAIN"/>
    <property type="match status" value="1"/>
</dbReference>
<protein>
    <recommendedName>
        <fullName>Calcium-dependent secretion activator</fullName>
    </recommendedName>
    <alternativeName>
        <fullName>Uncoordinated protein 31</fullName>
    </alternativeName>
</protein>
<keyword id="KW-0025">Alternative splicing</keyword>
<keyword id="KW-0106">Calcium</keyword>
<keyword id="KW-0175">Coiled coil</keyword>
<keyword id="KW-0968">Cytoplasmic vesicle</keyword>
<keyword id="KW-0268">Exocytosis</keyword>
<keyword id="KW-0446">Lipid-binding</keyword>
<keyword id="KW-0472">Membrane</keyword>
<keyword id="KW-0479">Metal-binding</keyword>
<keyword id="KW-0653">Protein transport</keyword>
<keyword id="KW-1185">Reference proteome</keyword>
<keyword id="KW-0770">Synapse</keyword>
<keyword id="KW-0813">Transport</keyword>
<accession>Q23658</accession>
<accession>C1P637</accession>
<accession>D3YT40</accession>
<accession>D3YT41</accession>
<accession>D3YT42</accession>
<accession>D3YT43</accession>
<proteinExistence type="evidence at transcript level"/>
<name>CAPS_CAEEL</name>
<feature type="chain" id="PRO_0000053871" description="Calcium-dependent secretion activator">
    <location>
        <begin position="1"/>
        <end position="1378"/>
    </location>
</feature>
<feature type="domain" description="C2" evidence="4">
    <location>
        <begin position="430"/>
        <end position="547"/>
    </location>
</feature>
<feature type="domain" description="PH" evidence="5">
    <location>
        <begin position="569"/>
        <end position="675"/>
    </location>
</feature>
<feature type="domain" description="MHD1" evidence="6">
    <location>
        <begin position="964"/>
        <end position="1095"/>
    </location>
</feature>
<feature type="region of interest" description="Disordered" evidence="7">
    <location>
        <begin position="1"/>
        <end position="138"/>
    </location>
</feature>
<feature type="coiled-coil region" evidence="3">
    <location>
        <begin position="121"/>
        <end position="184"/>
    </location>
</feature>
<feature type="compositionally biased region" description="Acidic residues" evidence="7">
    <location>
        <begin position="7"/>
        <end position="16"/>
    </location>
</feature>
<feature type="compositionally biased region" description="Low complexity" evidence="7">
    <location>
        <begin position="38"/>
        <end position="50"/>
    </location>
</feature>
<feature type="compositionally biased region" description="Polar residues" evidence="7">
    <location>
        <begin position="51"/>
        <end position="63"/>
    </location>
</feature>
<feature type="compositionally biased region" description="Polar residues" evidence="7">
    <location>
        <begin position="70"/>
        <end position="95"/>
    </location>
</feature>
<feature type="compositionally biased region" description="Acidic residues" evidence="7">
    <location>
        <begin position="96"/>
        <end position="105"/>
    </location>
</feature>
<feature type="compositionally biased region" description="Basic and acidic residues" evidence="7">
    <location>
        <begin position="123"/>
        <end position="138"/>
    </location>
</feature>
<feature type="splice variant" id="VSP_039774" description="In isoform f." evidence="14">
    <location>
        <begin position="1"/>
        <end position="1361"/>
    </location>
</feature>
<feature type="splice variant" id="VSP_039775" description="In isoform d and isoform e." evidence="14">
    <location>
        <begin position="1"/>
        <end position="448"/>
    </location>
</feature>
<feature type="splice variant" id="VSP_039776" description="In isoform a." evidence="14">
    <original>S</original>
    <variation>SPMRMNAPSPMPQ</variation>
    <location>
        <position position="78"/>
    </location>
</feature>
<feature type="splice variant" id="VSP_039777" description="In isoform a, isoform b and isoform d." evidence="14">
    <original>AAINGSAQGSVFPTSLGNATAAVSNMSSMVEGAGAKMFSLFK</original>
    <variation>GIRKH</variation>
    <location>
        <begin position="1337"/>
        <end position="1378"/>
    </location>
</feature>
<evidence type="ECO:0000250" key="1"/>
<evidence type="ECO:0000250" key="2">
    <source>
        <dbReference type="UniProtKB" id="Q62717"/>
    </source>
</evidence>
<evidence type="ECO:0000255" key="3"/>
<evidence type="ECO:0000255" key="4">
    <source>
        <dbReference type="PROSITE-ProRule" id="PRU00041"/>
    </source>
</evidence>
<evidence type="ECO:0000255" key="5">
    <source>
        <dbReference type="PROSITE-ProRule" id="PRU00145"/>
    </source>
</evidence>
<evidence type="ECO:0000255" key="6">
    <source>
        <dbReference type="PROSITE-ProRule" id="PRU00587"/>
    </source>
</evidence>
<evidence type="ECO:0000256" key="7">
    <source>
        <dbReference type="SAM" id="MobiDB-lite"/>
    </source>
</evidence>
<evidence type="ECO:0000269" key="8">
    <source>
    </source>
</evidence>
<evidence type="ECO:0000269" key="9">
    <source>
    </source>
</evidence>
<evidence type="ECO:0000269" key="10">
    <source>
    </source>
</evidence>
<evidence type="ECO:0000269" key="11">
    <source>
    </source>
</evidence>
<evidence type="ECO:0000269" key="12">
    <source>
    </source>
</evidence>
<evidence type="ECO:0000269" key="13">
    <source>
    </source>
</evidence>
<evidence type="ECO:0000305" key="14"/>
<reference key="1">
    <citation type="journal article" date="1998" name="Science">
        <title>Genome sequence of the nematode C. elegans: a platform for investigating biology.</title>
        <authorList>
            <consortium name="The C. elegans sequencing consortium"/>
        </authorList>
    </citation>
    <scope>NUCLEOTIDE SEQUENCE [LARGE SCALE GENOMIC DNA]</scope>
    <scope>ALTERNATIVE SPLICING</scope>
    <source>
        <strain>Bristol N2</strain>
    </source>
</reference>
<reference key="2">
    <citation type="journal article" date="1993" name="Genetics">
        <title>The Caenorhabditis elegans unc-31 gene affects multiple nervous system-controlled functions.</title>
        <authorList>
            <person name="Avery L."/>
            <person name="Bargmann C.I."/>
            <person name="Horvitz H.R."/>
        </authorList>
    </citation>
    <scope>PRELIMINARY FUNCTION</scope>
</reference>
<reference key="3">
    <citation type="journal article" date="1999" name="Proc. Natl. Acad. Sci. U.S.A.">
        <title>Neurosecretory control of aging in Caenorhabditis elegans.</title>
        <authorList>
            <person name="Ailion M."/>
            <person name="Inoue T."/>
            <person name="Weaver C.I."/>
            <person name="Holdcraft R.W."/>
            <person name="Thomas J.H."/>
        </authorList>
    </citation>
    <scope>PRELIMINARY FUNCTION</scope>
    <scope>DISRUPTION PHENOTYPE</scope>
</reference>
<reference key="4">
    <citation type="journal article" date="1999" name="Proc. Natl. Acad. Sci. U.S.A.">
        <authorList>
            <person name="Ailion M."/>
            <person name="Inoue T."/>
            <person name="Weaver C.I."/>
            <person name="Holdcraft R.W."/>
            <person name="Thomas J.H."/>
        </authorList>
    </citation>
    <scope>ERRATUM OF PUBMED:10377425</scope>
</reference>
<reference key="5">
    <citation type="journal article" date="2006" name="Genetics">
        <title>Presynaptic UNC-31 (CAPS) is required to activate the G(alpha)s pathway of the Caenorhabditis elegans synaptic signaling network.</title>
        <authorList>
            <person name="Charlie N.K."/>
            <person name="Schade M.A."/>
            <person name="Thomure A.M."/>
            <person name="Miller K.G."/>
        </authorList>
    </citation>
    <scope>FUNCTION</scope>
    <scope>SUBCELLULAR LOCATION</scope>
    <scope>TISSUE SPECIFICITY</scope>
</reference>
<reference key="6">
    <citation type="journal article" date="2007" name="J. Neurosci.">
        <title>FMRFamide-like neuropeptides and mechanosensory touch receptor neurons regulate male sexual turning behavior in Caenorhabditis elegans.</title>
        <authorList>
            <person name="Liu T."/>
            <person name="Kim K."/>
            <person name="Li C."/>
            <person name="Barr M.M."/>
        </authorList>
    </citation>
    <scope>FUNCTION</scope>
</reference>
<reference key="7">
    <citation type="journal article" date="2007" name="Nat. Neurosci.">
        <title>Epidermal growth factor signaling induces behavioral quiescence in Caenorhabditis elegans.</title>
        <authorList>
            <person name="Van Buskirk C."/>
            <person name="Sternberg P.W."/>
        </authorList>
    </citation>
    <scope>FUNCTION</scope>
</reference>
<reference key="8">
    <citation type="journal article" date="2008" name="Cell Metab.">
        <title>Insulin, cGMP, and TGF-beta signals regulate food intake and quiescence in C. elegans: a model for satiety.</title>
        <authorList>
            <person name="You Y.J."/>
            <person name="Kim J."/>
            <person name="Raizen D.M."/>
            <person name="Avery L."/>
        </authorList>
    </citation>
    <scope>FUNCTION</scope>
</reference>
<reference key="9">
    <citation type="journal article" date="2012" name="EMBO J.">
        <title>Monoamines and neuropeptides interact to inhibit aversive behaviour in Caenorhabditis elegans.</title>
        <authorList>
            <person name="Mills H."/>
            <person name="Wragg R."/>
            <person name="Hapiak V."/>
            <person name="Castelletto M."/>
            <person name="Zahratka J."/>
            <person name="Harris G."/>
            <person name="Summers P."/>
            <person name="Korchnak A."/>
            <person name="Law W."/>
            <person name="Bamber B."/>
            <person name="Komuniecki R."/>
        </authorList>
    </citation>
    <scope>FUNCTION</scope>
    <scope>DISRUPTION PHENOTYPE</scope>
</reference>
<comment type="function">
    <text evidence="2 9 10 11 12 13">Calcium-binding protein involved in exocytosis of vesicles filled with neurotransmitters and neuropeptides. Probably acts upstream of fusion in the biogenesis or maintenance of mature secretory vesicles. May specifically mediate the Ca(2+)-dependent exocytosis of large dense-core vesicles (DCVs) and other dense-core vesicles (By similarity). Specifically required to activate the neuronal G-alpha pathway. Functions with G-alpha proteins from the same motor neurons to regulate locomotion (PubMed:16272411). Involved in regulating entry into quiescence triggered by satiety (PubMed:18316030). Probably by regulating neuronal transmission downstream of lin-3 and receptor lin-23 and phospholipase plc-3 and upstream of innexin unc-7 and egl-4/PKG in ALA neurons, involved in the decrease in pharyngeal pumping during the quiescent state that precedes each larval molt (PubMed:17891142). Plays a role in octopamine signaling and specifically, the octopamine inhibition of aversion responses in olfactory sensory neurons (PubMed:22124329). Probably by controlling the secretion of FLP neuropeptides, regulates the turning step of male mating behavior (PubMed:17611271).</text>
</comment>
<comment type="subcellular location">
    <subcellularLocation>
        <location evidence="1">Cytoplasmic vesicle membrane</location>
    </subcellularLocation>
    <subcellularLocation>
        <location evidence="1">Synapse</location>
    </subcellularLocation>
    <text evidence="1 9">Membrane-associated to vesicles (By similarity). Strongly enriched in synaptic fractions. Often concentrated at or near active zones of motor neuron synapses.</text>
</comment>
<comment type="alternative products">
    <event type="alternative splicing"/>
    <isoform>
        <id>Q23658-3</id>
        <name>c</name>
        <sequence type="displayed"/>
    </isoform>
    <isoform>
        <id>Q23658-1</id>
        <name>a</name>
        <sequence type="described" ref="VSP_039776 VSP_039777"/>
    </isoform>
    <isoform>
        <id>Q23658-2</id>
        <name>b</name>
        <sequence type="described" ref="VSP_039777"/>
    </isoform>
    <isoform>
        <id>Q23658-4</id>
        <name>d</name>
        <sequence type="described" ref="VSP_039775 VSP_039777"/>
    </isoform>
    <isoform>
        <id>Q23658-5</id>
        <name>e</name>
        <sequence type="described" ref="VSP_039775"/>
    </isoform>
    <isoform>
        <id>Q23658-6</id>
        <name>f</name>
        <sequence type="described" ref="VSP_039774"/>
    </isoform>
</comment>
<comment type="tissue specificity">
    <text evidence="9">Within the ventral, dorsal and sublateral nerve cords, it is concentrated in cholinergic synapses. Within the ventral and dorsal nerve cords, it is not concentrated at most non-cholinergic synapses in the nerve cords, such as the GABAergic, glutamatergic, and catecholaminergic synapses. However, within the nerve ring, which contains a large number of interneuronal synapses in the head, it is clearly concentrated in regions containing large numbers of non-cholinergic synapses.</text>
</comment>
<comment type="domain">
    <text evidence="1">The PH domain is essential for regulated exocytosis and binds phospholipids.</text>
</comment>
<comment type="disruption phenotype">
    <text evidence="8 13">Worms display increased adult life span and constitutive dauer formation (PubMed:10377425). RNAi-mediated knockdown in ADL sensory neurons results in reduced octopamine inhibition of the aversive response when animals are exposed to 100% 1-octanol (PubMed:22124329).</text>
</comment>
<organism>
    <name type="scientific">Caenorhabditis elegans</name>
    <dbReference type="NCBI Taxonomy" id="6239"/>
    <lineage>
        <taxon>Eukaryota</taxon>
        <taxon>Metazoa</taxon>
        <taxon>Ecdysozoa</taxon>
        <taxon>Nematoda</taxon>
        <taxon>Chromadorea</taxon>
        <taxon>Rhabditida</taxon>
        <taxon>Rhabditina</taxon>
        <taxon>Rhabditomorpha</taxon>
        <taxon>Rhabditoidea</taxon>
        <taxon>Rhabditidae</taxon>
        <taxon>Peloderinae</taxon>
        <taxon>Caenorhabditis</taxon>
    </lineage>
</organism>
<gene>
    <name type="primary">unc-31</name>
    <name type="ORF">ZK897.1</name>
</gene>